<reference key="1">
    <citation type="submission" date="1999-07" db="EMBL/GenBank/DDBJ databases">
        <title>Rhizobium meliloti carries two sets of nuo genes.</title>
        <authorList>
            <person name="Putnoky P."/>
            <person name="Jady B."/>
            <person name="Chellapilla K.P."/>
            <person name="Barta F."/>
            <person name="Kiss E."/>
        </authorList>
    </citation>
    <scope>NUCLEOTIDE SEQUENCE [GENOMIC DNA]</scope>
    <source>
        <strain>41</strain>
    </source>
</reference>
<reference key="2">
    <citation type="journal article" date="2001" name="Proc. Natl. Acad. Sci. U.S.A.">
        <title>Analysis of the chromosome sequence of the legume symbiont Sinorhizobium meliloti strain 1021.</title>
        <authorList>
            <person name="Capela D."/>
            <person name="Barloy-Hubler F."/>
            <person name="Gouzy J."/>
            <person name="Bothe G."/>
            <person name="Ampe F."/>
            <person name="Batut J."/>
            <person name="Boistard P."/>
            <person name="Becker A."/>
            <person name="Boutry M."/>
            <person name="Cadieu E."/>
            <person name="Dreano S."/>
            <person name="Gloux S."/>
            <person name="Godrie T."/>
            <person name="Goffeau A."/>
            <person name="Kahn D."/>
            <person name="Kiss E."/>
            <person name="Lelaure V."/>
            <person name="Masuy D."/>
            <person name="Pohl T."/>
            <person name="Portetelle D."/>
            <person name="Puehler A."/>
            <person name="Purnelle B."/>
            <person name="Ramsperger U."/>
            <person name="Renard C."/>
            <person name="Thebault P."/>
            <person name="Vandenbol M."/>
            <person name="Weidner S."/>
            <person name="Galibert F."/>
        </authorList>
    </citation>
    <scope>NUCLEOTIDE SEQUENCE [LARGE SCALE GENOMIC DNA]</scope>
    <source>
        <strain>1021</strain>
    </source>
</reference>
<reference key="3">
    <citation type="journal article" date="2001" name="Science">
        <title>The composite genome of the legume symbiont Sinorhizobium meliloti.</title>
        <authorList>
            <person name="Galibert F."/>
            <person name="Finan T.M."/>
            <person name="Long S.R."/>
            <person name="Puehler A."/>
            <person name="Abola P."/>
            <person name="Ampe F."/>
            <person name="Barloy-Hubler F."/>
            <person name="Barnett M.J."/>
            <person name="Becker A."/>
            <person name="Boistard P."/>
            <person name="Bothe G."/>
            <person name="Boutry M."/>
            <person name="Bowser L."/>
            <person name="Buhrmester J."/>
            <person name="Cadieu E."/>
            <person name="Capela D."/>
            <person name="Chain P."/>
            <person name="Cowie A."/>
            <person name="Davis R.W."/>
            <person name="Dreano S."/>
            <person name="Federspiel N.A."/>
            <person name="Fisher R.F."/>
            <person name="Gloux S."/>
            <person name="Godrie T."/>
            <person name="Goffeau A."/>
            <person name="Golding B."/>
            <person name="Gouzy J."/>
            <person name="Gurjal M."/>
            <person name="Hernandez-Lucas I."/>
            <person name="Hong A."/>
            <person name="Huizar L."/>
            <person name="Hyman R.W."/>
            <person name="Jones T."/>
            <person name="Kahn D."/>
            <person name="Kahn M.L."/>
            <person name="Kalman S."/>
            <person name="Keating D.H."/>
            <person name="Kiss E."/>
            <person name="Komp C."/>
            <person name="Lelaure V."/>
            <person name="Masuy D."/>
            <person name="Palm C."/>
            <person name="Peck M.C."/>
            <person name="Pohl T.M."/>
            <person name="Portetelle D."/>
            <person name="Purnelle B."/>
            <person name="Ramsperger U."/>
            <person name="Surzycki R."/>
            <person name="Thebault P."/>
            <person name="Vandenbol M."/>
            <person name="Vorhoelter F.J."/>
            <person name="Weidner S."/>
            <person name="Wells D.H."/>
            <person name="Wong K."/>
            <person name="Yeh K.-C."/>
            <person name="Batut J."/>
        </authorList>
    </citation>
    <scope>NUCLEOTIDE SEQUENCE [LARGE SCALE GENOMIC DNA]</scope>
    <source>
        <strain>1021</strain>
    </source>
</reference>
<protein>
    <recommendedName>
        <fullName>NADH-quinone oxidoreductase subunit E 1</fullName>
        <ecNumber>7.1.1.-</ecNumber>
    </recommendedName>
    <alternativeName>
        <fullName>NADH dehydrogenase I subunit E 1</fullName>
    </alternativeName>
    <alternativeName>
        <fullName>NDH-1 subunit E 1</fullName>
    </alternativeName>
</protein>
<organism>
    <name type="scientific">Rhizobium meliloti (strain 1021)</name>
    <name type="common">Ensifer meliloti</name>
    <name type="synonym">Sinorhizobium meliloti</name>
    <dbReference type="NCBI Taxonomy" id="266834"/>
    <lineage>
        <taxon>Bacteria</taxon>
        <taxon>Pseudomonadati</taxon>
        <taxon>Pseudomonadota</taxon>
        <taxon>Alphaproteobacteria</taxon>
        <taxon>Hyphomicrobiales</taxon>
        <taxon>Rhizobiaceae</taxon>
        <taxon>Sinorhizobium/Ensifer group</taxon>
        <taxon>Sinorhizobium</taxon>
    </lineage>
</organism>
<gene>
    <name type="primary">nuoE1</name>
    <name type="synonym">nuoE</name>
    <name type="ordered locus">R01269</name>
    <name type="ORF">SMc01917</name>
</gene>
<evidence type="ECO:0000250" key="1"/>
<evidence type="ECO:0000255" key="2"/>
<evidence type="ECO:0000256" key="3">
    <source>
        <dbReference type="SAM" id="MobiDB-lite"/>
    </source>
</evidence>
<evidence type="ECO:0000305" key="4"/>
<accession>P56909</accession>
<sequence length="275" mass="29906">MSVRRLAEDTVQPAAFAFSKENAAWAEATIKKYPEGREQSAVIPLLMRAQEQDGWVTRAAIESVADMLGMAYIRVLEVATFYTQFQLQPVGTRAHVQVCGTTPCMLRGAEDLIKICKKKIASEPFTLNEGGTLSWEEVECQGACVNAPMVMIFKDTFEDLTPERLEEIIDRFEAGKGSEVVPGPQIDRVYSAPIGGLTTLQAPEPVEEKKSVRASKAKDEQAVSVPPSNAAKPSTATDVTNPTLKTPATARKAAAKNVKIEGETVDKSKPAKKPR</sequence>
<keyword id="KW-0001">2Fe-2S</keyword>
<keyword id="KW-0408">Iron</keyword>
<keyword id="KW-0411">Iron-sulfur</keyword>
<keyword id="KW-0479">Metal-binding</keyword>
<keyword id="KW-0520">NAD</keyword>
<keyword id="KW-0874">Quinone</keyword>
<keyword id="KW-1185">Reference proteome</keyword>
<keyword id="KW-1278">Translocase</keyword>
<keyword id="KW-0830">Ubiquinone</keyword>
<feature type="chain" id="PRO_0000118698" description="NADH-quinone oxidoreductase subunit E 1">
    <location>
        <begin position="1"/>
        <end position="275"/>
    </location>
</feature>
<feature type="region of interest" description="Disordered" evidence="3">
    <location>
        <begin position="200"/>
        <end position="275"/>
    </location>
</feature>
<feature type="compositionally biased region" description="Basic and acidic residues" evidence="3">
    <location>
        <begin position="206"/>
        <end position="221"/>
    </location>
</feature>
<feature type="compositionally biased region" description="Polar residues" evidence="3">
    <location>
        <begin position="231"/>
        <end position="242"/>
    </location>
</feature>
<feature type="compositionally biased region" description="Low complexity" evidence="3">
    <location>
        <begin position="243"/>
        <end position="256"/>
    </location>
</feature>
<feature type="compositionally biased region" description="Basic and acidic residues" evidence="3">
    <location>
        <begin position="258"/>
        <end position="269"/>
    </location>
</feature>
<feature type="binding site" evidence="2">
    <location>
        <position position="99"/>
    </location>
    <ligand>
        <name>[2Fe-2S] cluster</name>
        <dbReference type="ChEBI" id="CHEBI:190135"/>
    </ligand>
</feature>
<feature type="binding site" evidence="2">
    <location>
        <position position="104"/>
    </location>
    <ligand>
        <name>[2Fe-2S] cluster</name>
        <dbReference type="ChEBI" id="CHEBI:190135"/>
    </ligand>
</feature>
<feature type="binding site" evidence="2">
    <location>
        <position position="140"/>
    </location>
    <ligand>
        <name>[2Fe-2S] cluster</name>
        <dbReference type="ChEBI" id="CHEBI:190135"/>
    </ligand>
</feature>
<feature type="binding site" evidence="2">
    <location>
        <position position="144"/>
    </location>
    <ligand>
        <name>[2Fe-2S] cluster</name>
        <dbReference type="ChEBI" id="CHEBI:190135"/>
    </ligand>
</feature>
<feature type="sequence conflict" description="In Ref. 1." evidence="4" ref="1">
    <original>S</original>
    <variation>KP</variation>
    <location>
        <position position="211"/>
    </location>
</feature>
<comment type="function">
    <text evidence="1">NDH-1 shuttles electrons from NADH, via FMN and iron-sulfur (Fe-S) centers, to quinones in the respiratory chain. The immediate electron acceptor for the enzyme in this species is believed to be ubiquinone. Couples the redox reaction to proton translocation (for every two electrons transferred, four hydrogen ions are translocated across the cytoplasmic membrane), and thus conserves the redox energy in a proton gradient (By similarity).</text>
</comment>
<comment type="catalytic activity">
    <reaction>
        <text>a quinone + NADH + 5 H(+)(in) = a quinol + NAD(+) + 4 H(+)(out)</text>
        <dbReference type="Rhea" id="RHEA:57888"/>
        <dbReference type="ChEBI" id="CHEBI:15378"/>
        <dbReference type="ChEBI" id="CHEBI:24646"/>
        <dbReference type="ChEBI" id="CHEBI:57540"/>
        <dbReference type="ChEBI" id="CHEBI:57945"/>
        <dbReference type="ChEBI" id="CHEBI:132124"/>
    </reaction>
</comment>
<comment type="cofactor">
    <cofactor evidence="4">
        <name>[2Fe-2S] cluster</name>
        <dbReference type="ChEBI" id="CHEBI:190135"/>
    </cofactor>
    <text evidence="4">Binds 1 [2Fe-2S] cluster.</text>
</comment>
<comment type="similarity">
    <text evidence="4">Belongs to the complex I 24 kDa subunit family.</text>
</comment>
<name>NUOE1_RHIME</name>
<proteinExistence type="inferred from homology"/>
<dbReference type="EC" id="7.1.1.-"/>
<dbReference type="EMBL" id="AJ245398">
    <property type="protein sequence ID" value="CAB51625.1"/>
    <property type="molecule type" value="Genomic_DNA"/>
</dbReference>
<dbReference type="EMBL" id="AL591688">
    <property type="protein sequence ID" value="CAC45848.1"/>
    <property type="molecule type" value="Genomic_DNA"/>
</dbReference>
<dbReference type="RefSeq" id="NP_385375.1">
    <property type="nucleotide sequence ID" value="NC_003047.1"/>
</dbReference>
<dbReference type="RefSeq" id="WP_010969146.1">
    <property type="nucleotide sequence ID" value="NC_003047.1"/>
</dbReference>
<dbReference type="SMR" id="P56909"/>
<dbReference type="EnsemblBacteria" id="CAC45848">
    <property type="protein sequence ID" value="CAC45848"/>
    <property type="gene ID" value="SMc01917"/>
</dbReference>
<dbReference type="KEGG" id="sme:SMc01917"/>
<dbReference type="PATRIC" id="fig|266834.11.peg.2683"/>
<dbReference type="eggNOG" id="COG1905">
    <property type="taxonomic scope" value="Bacteria"/>
</dbReference>
<dbReference type="HOGENOM" id="CLU_054362_0_1_5"/>
<dbReference type="OrthoDB" id="9807941at2"/>
<dbReference type="Proteomes" id="UP000001976">
    <property type="component" value="Chromosome"/>
</dbReference>
<dbReference type="GO" id="GO:0051537">
    <property type="term" value="F:2 iron, 2 sulfur cluster binding"/>
    <property type="evidence" value="ECO:0007669"/>
    <property type="project" value="UniProtKB-KW"/>
</dbReference>
<dbReference type="GO" id="GO:0046872">
    <property type="term" value="F:metal ion binding"/>
    <property type="evidence" value="ECO:0007669"/>
    <property type="project" value="UniProtKB-KW"/>
</dbReference>
<dbReference type="GO" id="GO:0003954">
    <property type="term" value="F:NADH dehydrogenase activity"/>
    <property type="evidence" value="ECO:0007669"/>
    <property type="project" value="TreeGrafter"/>
</dbReference>
<dbReference type="GO" id="GO:0048038">
    <property type="term" value="F:quinone binding"/>
    <property type="evidence" value="ECO:0007669"/>
    <property type="project" value="UniProtKB-KW"/>
</dbReference>
<dbReference type="CDD" id="cd03064">
    <property type="entry name" value="TRX_Fd_NuoE"/>
    <property type="match status" value="1"/>
</dbReference>
<dbReference type="FunFam" id="1.10.10.1590:FF:000001">
    <property type="entry name" value="NADH-quinone oxidoreductase subunit E"/>
    <property type="match status" value="1"/>
</dbReference>
<dbReference type="Gene3D" id="3.40.30.10">
    <property type="entry name" value="Glutaredoxin"/>
    <property type="match status" value="1"/>
</dbReference>
<dbReference type="Gene3D" id="1.10.10.1590">
    <property type="entry name" value="NADH-quinone oxidoreductase subunit E"/>
    <property type="match status" value="1"/>
</dbReference>
<dbReference type="InterPro" id="IPR002023">
    <property type="entry name" value="NuoE-like"/>
</dbReference>
<dbReference type="InterPro" id="IPR042128">
    <property type="entry name" value="NuoE_dom"/>
</dbReference>
<dbReference type="InterPro" id="IPR041921">
    <property type="entry name" value="NuoE_N"/>
</dbReference>
<dbReference type="InterPro" id="IPR036249">
    <property type="entry name" value="Thioredoxin-like_sf"/>
</dbReference>
<dbReference type="NCBIfam" id="TIGR01958">
    <property type="entry name" value="nuoE_fam"/>
    <property type="match status" value="1"/>
</dbReference>
<dbReference type="NCBIfam" id="NF005724">
    <property type="entry name" value="PRK07539.1-4"/>
    <property type="match status" value="1"/>
</dbReference>
<dbReference type="PANTHER" id="PTHR10371:SF3">
    <property type="entry name" value="NADH DEHYDROGENASE [UBIQUINONE] FLAVOPROTEIN 2, MITOCHONDRIAL"/>
    <property type="match status" value="1"/>
</dbReference>
<dbReference type="PANTHER" id="PTHR10371">
    <property type="entry name" value="NADH DEHYDROGENASE UBIQUINONE FLAVOPROTEIN 2, MITOCHONDRIAL"/>
    <property type="match status" value="1"/>
</dbReference>
<dbReference type="Pfam" id="PF01257">
    <property type="entry name" value="2Fe-2S_thioredx"/>
    <property type="match status" value="1"/>
</dbReference>
<dbReference type="PIRSF" id="PIRSF000216">
    <property type="entry name" value="NADH_DH_24kDa"/>
    <property type="match status" value="1"/>
</dbReference>
<dbReference type="SUPFAM" id="SSF52833">
    <property type="entry name" value="Thioredoxin-like"/>
    <property type="match status" value="1"/>
</dbReference>
<dbReference type="PROSITE" id="PS01099">
    <property type="entry name" value="COMPLEX1_24K"/>
    <property type="match status" value="1"/>
</dbReference>